<name>039R_FRG3G</name>
<keyword id="KW-1185">Reference proteome</keyword>
<feature type="chain" id="PRO_0000410519" description="Uncharacterized protein 039R">
    <location>
        <begin position="1"/>
        <end position="116"/>
    </location>
</feature>
<feature type="region of interest" description="Disordered" evidence="1">
    <location>
        <begin position="77"/>
        <end position="116"/>
    </location>
</feature>
<proteinExistence type="predicted"/>
<accession>Q6GZT7</accession>
<dbReference type="EMBL" id="AY548484">
    <property type="protein sequence ID" value="AAT09698.1"/>
    <property type="molecule type" value="Genomic_DNA"/>
</dbReference>
<dbReference type="RefSeq" id="YP_031617.1">
    <property type="nucleotide sequence ID" value="NC_005946.1"/>
</dbReference>
<dbReference type="KEGG" id="vg:2947818"/>
<dbReference type="Proteomes" id="UP000008770">
    <property type="component" value="Segment"/>
</dbReference>
<sequence length="116" mass="12710">MTSYCDTLKALAAESDSTGSERATIRMYMAMFSDASLRPAVSDTVASILGTDSLDHEDAEMMLKFKLLFFSGSANASATSHYPKADDPQRFARSVSRGPSRVRRPARNSASRPVRR</sequence>
<protein>
    <recommendedName>
        <fullName>Uncharacterized protein 039R</fullName>
    </recommendedName>
</protein>
<organism>
    <name type="scientific">Frog virus 3 (isolate Goorha)</name>
    <name type="common">FV-3</name>
    <dbReference type="NCBI Taxonomy" id="654924"/>
    <lineage>
        <taxon>Viruses</taxon>
        <taxon>Varidnaviria</taxon>
        <taxon>Bamfordvirae</taxon>
        <taxon>Nucleocytoviricota</taxon>
        <taxon>Megaviricetes</taxon>
        <taxon>Pimascovirales</taxon>
        <taxon>Iridoviridae</taxon>
        <taxon>Alphairidovirinae</taxon>
        <taxon>Ranavirus</taxon>
        <taxon>Frog virus 3</taxon>
    </lineage>
</organism>
<gene>
    <name type="ORF">FV3-039R</name>
</gene>
<organismHost>
    <name type="scientific">Dryophytes versicolor</name>
    <name type="common">chameleon treefrog</name>
    <dbReference type="NCBI Taxonomy" id="30343"/>
</organismHost>
<organismHost>
    <name type="scientific">Lithobates pipiens</name>
    <name type="common">Northern leopard frog</name>
    <name type="synonym">Rana pipiens</name>
    <dbReference type="NCBI Taxonomy" id="8404"/>
</organismHost>
<organismHost>
    <name type="scientific">Lithobates sylvaticus</name>
    <name type="common">Wood frog</name>
    <name type="synonym">Rana sylvatica</name>
    <dbReference type="NCBI Taxonomy" id="45438"/>
</organismHost>
<organismHost>
    <name type="scientific">Notophthalmus viridescens</name>
    <name type="common">Eastern newt</name>
    <name type="synonym">Triturus viridescens</name>
    <dbReference type="NCBI Taxonomy" id="8316"/>
</organismHost>
<evidence type="ECO:0000256" key="1">
    <source>
        <dbReference type="SAM" id="MobiDB-lite"/>
    </source>
</evidence>
<reference key="1">
    <citation type="journal article" date="2004" name="Virology">
        <title>Comparative genomic analyses of frog virus 3, type species of the genus Ranavirus (family Iridoviridae).</title>
        <authorList>
            <person name="Tan W.G."/>
            <person name="Barkman T.J."/>
            <person name="Gregory Chinchar V."/>
            <person name="Essani K."/>
        </authorList>
    </citation>
    <scope>NUCLEOTIDE SEQUENCE [LARGE SCALE GENOMIC DNA]</scope>
</reference>